<dbReference type="PIR" id="B45041">
    <property type="entry name" value="B45041"/>
</dbReference>
<dbReference type="SMR" id="P35628"/>
<dbReference type="MEROPS" id="I07.010"/>
<dbReference type="GO" id="GO:0005576">
    <property type="term" value="C:extracellular region"/>
    <property type="evidence" value="ECO:0007669"/>
    <property type="project" value="UniProtKB-SubCell"/>
</dbReference>
<dbReference type="GO" id="GO:0004867">
    <property type="term" value="F:serine-type endopeptidase inhibitor activity"/>
    <property type="evidence" value="ECO:0007669"/>
    <property type="project" value="UniProtKB-KW"/>
</dbReference>
<dbReference type="CDD" id="cd00150">
    <property type="entry name" value="PlantTI"/>
    <property type="match status" value="1"/>
</dbReference>
<dbReference type="Gene3D" id="4.10.75.20">
    <property type="match status" value="1"/>
</dbReference>
<dbReference type="InterPro" id="IPR000737">
    <property type="entry name" value="Prot_inh_squash"/>
</dbReference>
<dbReference type="InterPro" id="IPR011052">
    <property type="entry name" value="Proteinase_amylase_inhib_sf"/>
</dbReference>
<dbReference type="Pfam" id="PF00299">
    <property type="entry name" value="Squash"/>
    <property type="match status" value="1"/>
</dbReference>
<dbReference type="PRINTS" id="PR00293">
    <property type="entry name" value="SQUASHINHBTR"/>
</dbReference>
<dbReference type="SMART" id="SM00286">
    <property type="entry name" value="PTI"/>
    <property type="match status" value="1"/>
</dbReference>
<dbReference type="SUPFAM" id="SSF57027">
    <property type="entry name" value="Plant inhibitors of proteinases and amylases"/>
    <property type="match status" value="1"/>
</dbReference>
<dbReference type="PROSITE" id="PS00286">
    <property type="entry name" value="SQUASH_INHIBITOR"/>
    <property type="match status" value="1"/>
</dbReference>
<proteinExistence type="evidence at protein level"/>
<organism>
    <name type="scientific">Luffa aegyptiaca</name>
    <name type="common">Sponge gourd</name>
    <name type="synonym">Luffa cylindrica</name>
    <dbReference type="NCBI Taxonomy" id="3670"/>
    <lineage>
        <taxon>Eukaryota</taxon>
        <taxon>Viridiplantae</taxon>
        <taxon>Streptophyta</taxon>
        <taxon>Embryophyta</taxon>
        <taxon>Tracheophyta</taxon>
        <taxon>Spermatophyta</taxon>
        <taxon>Magnoliopsida</taxon>
        <taxon>eudicotyledons</taxon>
        <taxon>Gunneridae</taxon>
        <taxon>Pentapetalae</taxon>
        <taxon>rosids</taxon>
        <taxon>fabids</taxon>
        <taxon>Cucurbitales</taxon>
        <taxon>Cucurbitaceae</taxon>
        <taxon>Sicyoeae</taxon>
        <taxon>Luffa</taxon>
    </lineage>
</organism>
<protein>
    <recommendedName>
        <fullName>Trypsin inhibitor 4</fullName>
    </recommendedName>
    <alternativeName>
        <fullName>TGTI-I</fullName>
    </alternativeName>
    <alternativeName>
        <fullName>Trypsin inhibitor I</fullName>
    </alternativeName>
</protein>
<evidence type="ECO:0000250" key="1"/>
<evidence type="ECO:0000305" key="2"/>
<feature type="peptide" id="PRO_0000044385" description="Trypsin inhibitor 4">
    <location>
        <begin position="1"/>
        <end position="28"/>
    </location>
</feature>
<feature type="site" description="Reactive bond">
    <location>
        <begin position="4"/>
        <end position="5"/>
    </location>
</feature>
<feature type="disulfide bond" evidence="1">
    <location>
        <begin position="2"/>
        <end position="19"/>
    </location>
</feature>
<feature type="disulfide bond" evidence="1">
    <location>
        <begin position="9"/>
        <end position="21"/>
    </location>
</feature>
<feature type="disulfide bond" evidence="1">
    <location>
        <begin position="15"/>
        <end position="27"/>
    </location>
</feature>
<sequence>ICPRILMPCSSDSDCLAECICLENGFCG</sequence>
<name>ITR4_LUFAE</name>
<keyword id="KW-0903">Direct protein sequencing</keyword>
<keyword id="KW-1015">Disulfide bond</keyword>
<keyword id="KW-0960">Knottin</keyword>
<keyword id="KW-0646">Protease inhibitor</keyword>
<keyword id="KW-0964">Secreted</keyword>
<keyword id="KW-0722">Serine protease inhibitor</keyword>
<comment type="function">
    <text>Inhibits trypsin.</text>
</comment>
<comment type="subcellular location">
    <subcellularLocation>
        <location>Secreted</location>
    </subcellularLocation>
</comment>
<comment type="domain">
    <text evidence="1">The presence of a 'disulfide through disulfide knot' structurally defines this protein as a knottin.</text>
</comment>
<comment type="similarity">
    <text evidence="2">Belongs to the protease inhibitor I7 (squash-type serine protease inhibitor) family.</text>
</comment>
<accession>P35628</accession>
<reference key="1">
    <citation type="journal article" date="1993" name="J. Biol. Chem.">
        <title>Protein, cDNA, and genomic DNA sequences of the towel gourd trypsin inhibitor. A squash family inhibitor.</title>
        <authorList>
            <person name="Ling M.-H."/>
            <person name="Qi H.-Y."/>
            <person name="Chi C.-W."/>
        </authorList>
    </citation>
    <scope>PROTEIN SEQUENCE</scope>
</reference>